<proteinExistence type="inferred from homology"/>
<comment type="function">
    <text evidence="1">Involved in the modulation of the specificity of the ClpAP-mediated ATP-dependent protein degradation.</text>
</comment>
<comment type="subunit">
    <text evidence="1">Binds to the N-terminal domain of the chaperone ClpA.</text>
</comment>
<comment type="similarity">
    <text evidence="1">Belongs to the ClpS family.</text>
</comment>
<reference key="1">
    <citation type="journal article" date="2005" name="Proc. Natl. Acad. Sci. U.S.A.">
        <title>Comparison of the complete genome sequences of Pseudomonas syringae pv. syringae B728a and pv. tomato DC3000.</title>
        <authorList>
            <person name="Feil H."/>
            <person name="Feil W.S."/>
            <person name="Chain P."/>
            <person name="Larimer F."/>
            <person name="Dibartolo G."/>
            <person name="Copeland A."/>
            <person name="Lykidis A."/>
            <person name="Trong S."/>
            <person name="Nolan M."/>
            <person name="Goltsman E."/>
            <person name="Thiel J."/>
            <person name="Malfatti S."/>
            <person name="Loper J.E."/>
            <person name="Lapidus A."/>
            <person name="Detter J.C."/>
            <person name="Land M."/>
            <person name="Richardson P.M."/>
            <person name="Kyrpides N.C."/>
            <person name="Ivanova N."/>
            <person name="Lindow S.E."/>
        </authorList>
    </citation>
    <scope>NUCLEOTIDE SEQUENCE [LARGE SCALE GENOMIC DNA]</scope>
    <source>
        <strain>B728a</strain>
    </source>
</reference>
<dbReference type="EMBL" id="CP000075">
    <property type="protein sequence ID" value="AAY38216.1"/>
    <property type="molecule type" value="Genomic_DNA"/>
</dbReference>
<dbReference type="RefSeq" id="WP_003405085.1">
    <property type="nucleotide sequence ID" value="NC_007005.1"/>
</dbReference>
<dbReference type="RefSeq" id="YP_236254.1">
    <property type="nucleotide sequence ID" value="NC_007005.1"/>
</dbReference>
<dbReference type="SMR" id="Q4ZRK6"/>
<dbReference type="STRING" id="205918.Psyr_3184"/>
<dbReference type="GeneID" id="65074523"/>
<dbReference type="KEGG" id="psb:Psyr_3184"/>
<dbReference type="PATRIC" id="fig|205918.7.peg.3250"/>
<dbReference type="eggNOG" id="COG2127">
    <property type="taxonomic scope" value="Bacteria"/>
</dbReference>
<dbReference type="HOGENOM" id="CLU_134358_2_0_6"/>
<dbReference type="OrthoDB" id="9796121at2"/>
<dbReference type="Proteomes" id="UP000000426">
    <property type="component" value="Chromosome"/>
</dbReference>
<dbReference type="GO" id="GO:0030163">
    <property type="term" value="P:protein catabolic process"/>
    <property type="evidence" value="ECO:0007669"/>
    <property type="project" value="InterPro"/>
</dbReference>
<dbReference type="GO" id="GO:0006508">
    <property type="term" value="P:proteolysis"/>
    <property type="evidence" value="ECO:0007669"/>
    <property type="project" value="UniProtKB-UniRule"/>
</dbReference>
<dbReference type="FunFam" id="3.30.1390.10:FF:000002">
    <property type="entry name" value="ATP-dependent Clp protease adapter protein ClpS"/>
    <property type="match status" value="1"/>
</dbReference>
<dbReference type="Gene3D" id="3.30.1390.10">
    <property type="match status" value="1"/>
</dbReference>
<dbReference type="HAMAP" id="MF_00302">
    <property type="entry name" value="ClpS"/>
    <property type="match status" value="1"/>
</dbReference>
<dbReference type="InterPro" id="IPR022935">
    <property type="entry name" value="ClpS"/>
</dbReference>
<dbReference type="InterPro" id="IPR003769">
    <property type="entry name" value="ClpS_core"/>
</dbReference>
<dbReference type="InterPro" id="IPR014719">
    <property type="entry name" value="Ribosomal_bL12_C/ClpS-like"/>
</dbReference>
<dbReference type="NCBIfam" id="NF000669">
    <property type="entry name" value="PRK00033.1-2"/>
    <property type="match status" value="1"/>
</dbReference>
<dbReference type="NCBIfam" id="NF000672">
    <property type="entry name" value="PRK00033.1-5"/>
    <property type="match status" value="1"/>
</dbReference>
<dbReference type="PANTHER" id="PTHR33473:SF19">
    <property type="entry name" value="ATP-DEPENDENT CLP PROTEASE ADAPTER PROTEIN CLPS"/>
    <property type="match status" value="1"/>
</dbReference>
<dbReference type="PANTHER" id="PTHR33473">
    <property type="entry name" value="ATP-DEPENDENT CLP PROTEASE ADAPTER PROTEIN CLPS1, CHLOROPLASTIC"/>
    <property type="match status" value="1"/>
</dbReference>
<dbReference type="Pfam" id="PF02617">
    <property type="entry name" value="ClpS"/>
    <property type="match status" value="1"/>
</dbReference>
<dbReference type="SUPFAM" id="SSF54736">
    <property type="entry name" value="ClpS-like"/>
    <property type="match status" value="1"/>
</dbReference>
<protein>
    <recommendedName>
        <fullName evidence="1">ATP-dependent Clp protease adapter protein ClpS</fullName>
    </recommendedName>
</protein>
<name>CLPS_PSEU2</name>
<gene>
    <name evidence="1" type="primary">clpS</name>
    <name type="ordered locus">Psyr_3184</name>
</gene>
<evidence type="ECO:0000255" key="1">
    <source>
        <dbReference type="HAMAP-Rule" id="MF_00302"/>
    </source>
</evidence>
<sequence>MHAFSKIRLTFNQDDPQSHEDDSAGIAVQDAKPTLQAPPMYKVVLFNDDYTPMDFVVEVLEVFFNLNRELATKVMLAVHTEGRAVCGLFTRDIAETKAMQVNQYARESQHPLLCEIEKDG</sequence>
<accession>Q4ZRK6</accession>
<feature type="chain" id="PRO_0000300720" description="ATP-dependent Clp protease adapter protein ClpS">
    <location>
        <begin position="1"/>
        <end position="120"/>
    </location>
</feature>
<organism>
    <name type="scientific">Pseudomonas syringae pv. syringae (strain B728a)</name>
    <dbReference type="NCBI Taxonomy" id="205918"/>
    <lineage>
        <taxon>Bacteria</taxon>
        <taxon>Pseudomonadati</taxon>
        <taxon>Pseudomonadota</taxon>
        <taxon>Gammaproteobacteria</taxon>
        <taxon>Pseudomonadales</taxon>
        <taxon>Pseudomonadaceae</taxon>
        <taxon>Pseudomonas</taxon>
        <taxon>Pseudomonas syringae</taxon>
    </lineage>
</organism>